<reference key="1">
    <citation type="journal article" date="2006" name="J. Bacteriol.">
        <title>Complete genome sequence of Yersinia pestis strains Antiqua and Nepal516: evidence of gene reduction in an emerging pathogen.</title>
        <authorList>
            <person name="Chain P.S.G."/>
            <person name="Hu P."/>
            <person name="Malfatti S.A."/>
            <person name="Radnedge L."/>
            <person name="Larimer F."/>
            <person name="Vergez L.M."/>
            <person name="Worsham P."/>
            <person name="Chu M.C."/>
            <person name="Andersen G.L."/>
        </authorList>
    </citation>
    <scope>NUCLEOTIDE SEQUENCE [LARGE SCALE GENOMIC DNA]</scope>
    <source>
        <strain>Nepal516</strain>
    </source>
</reference>
<reference key="2">
    <citation type="submission" date="2009-04" db="EMBL/GenBank/DDBJ databases">
        <title>Yersinia pestis Nepal516A whole genome shotgun sequencing project.</title>
        <authorList>
            <person name="Plunkett G. III"/>
            <person name="Anderson B.D."/>
            <person name="Baumler D.J."/>
            <person name="Burland V."/>
            <person name="Cabot E.L."/>
            <person name="Glasner J.D."/>
            <person name="Mau B."/>
            <person name="Neeno-Eckwall E."/>
            <person name="Perna N.T."/>
            <person name="Munk A.C."/>
            <person name="Tapia R."/>
            <person name="Green L.D."/>
            <person name="Rogers Y.C."/>
            <person name="Detter J.C."/>
            <person name="Bruce D.C."/>
            <person name="Brettin T.S."/>
        </authorList>
    </citation>
    <scope>NUCLEOTIDE SEQUENCE [LARGE SCALE GENOMIC DNA]</scope>
    <source>
        <strain>Nepal516</strain>
    </source>
</reference>
<accession>Q1CCY0</accession>
<accession>D1Q2I4</accession>
<feature type="chain" id="PRO_0000353026" description="Threonylcarbamoyl-AMP synthase">
    <location>
        <begin position="1"/>
        <end position="190"/>
    </location>
</feature>
<feature type="domain" description="YrdC-like" evidence="1">
    <location>
        <begin position="7"/>
        <end position="190"/>
    </location>
</feature>
<sequence length="190" mass="21153">MNQQENNFVLADIVRALRQEEVIAYPTEAVFGLGCDPDSEKAVNTLLALKQRPWQKGLILVAANYAQLEPYINDSMLNEIQRETLFSTWPGPITWVIPARVETPQWLTGCFDSLAVRVSNHPLVQQLCAEYGKPLVSTSANLSGHEPCRTEEEVRIQFGPSLPVLSGHVGGRLNPSEIRDALTGKRFRQG</sequence>
<protein>
    <recommendedName>
        <fullName evidence="1">Threonylcarbamoyl-AMP synthase</fullName>
        <shortName evidence="1">TC-AMP synthase</shortName>
        <ecNumber evidence="1">2.7.7.87</ecNumber>
    </recommendedName>
    <alternativeName>
        <fullName evidence="1">L-threonylcarbamoyladenylate synthase</fullName>
    </alternativeName>
    <alternativeName>
        <fullName evidence="1">t(6)A37 threonylcarbamoyladenosine biosynthesis protein TsaC</fullName>
    </alternativeName>
    <alternativeName>
        <fullName evidence="1">tRNA threonylcarbamoyladenosine biosynthesis protein TsaC</fullName>
    </alternativeName>
</protein>
<name>TSAC_YERPN</name>
<comment type="function">
    <text evidence="1">Required for the formation of a threonylcarbamoyl group on adenosine at position 37 (t(6)A37) in tRNAs that read codons beginning with adenine. Catalyzes the conversion of L-threonine, HCO(3)(-)/CO(2) and ATP to give threonylcarbamoyl-AMP (TC-AMP) as the acyladenylate intermediate, with the release of diphosphate.</text>
</comment>
<comment type="catalytic activity">
    <reaction evidence="1">
        <text>L-threonine + hydrogencarbonate + ATP = L-threonylcarbamoyladenylate + diphosphate + H2O</text>
        <dbReference type="Rhea" id="RHEA:36407"/>
        <dbReference type="ChEBI" id="CHEBI:15377"/>
        <dbReference type="ChEBI" id="CHEBI:17544"/>
        <dbReference type="ChEBI" id="CHEBI:30616"/>
        <dbReference type="ChEBI" id="CHEBI:33019"/>
        <dbReference type="ChEBI" id="CHEBI:57926"/>
        <dbReference type="ChEBI" id="CHEBI:73682"/>
        <dbReference type="EC" id="2.7.7.87"/>
    </reaction>
</comment>
<comment type="subcellular location">
    <subcellularLocation>
        <location evidence="1">Cytoplasm</location>
    </subcellularLocation>
</comment>
<comment type="similarity">
    <text evidence="1">Belongs to the SUA5 family. TsaC subfamily.</text>
</comment>
<proteinExistence type="inferred from homology"/>
<gene>
    <name evidence="1" type="primary">tsaC</name>
    <name type="synonym">rimN</name>
    <name type="ordered locus">YPN_3823</name>
    <name type="ORF">YP516_4345</name>
</gene>
<dbReference type="EC" id="2.7.7.87" evidence="1"/>
<dbReference type="EMBL" id="CP000305">
    <property type="protein sequence ID" value="ABG20150.1"/>
    <property type="molecule type" value="Genomic_DNA"/>
</dbReference>
<dbReference type="EMBL" id="ACNQ01000019">
    <property type="protein sequence ID" value="EEO74737.1"/>
    <property type="molecule type" value="Genomic_DNA"/>
</dbReference>
<dbReference type="RefSeq" id="WP_002209025.1">
    <property type="nucleotide sequence ID" value="NZ_ACNQ01000019.1"/>
</dbReference>
<dbReference type="SMR" id="Q1CCY0"/>
<dbReference type="GeneID" id="57974358"/>
<dbReference type="KEGG" id="ypn:YPN_3823"/>
<dbReference type="HOGENOM" id="CLU_031397_6_0_6"/>
<dbReference type="Proteomes" id="UP000008936">
    <property type="component" value="Chromosome"/>
</dbReference>
<dbReference type="GO" id="GO:0005737">
    <property type="term" value="C:cytoplasm"/>
    <property type="evidence" value="ECO:0007669"/>
    <property type="project" value="UniProtKB-SubCell"/>
</dbReference>
<dbReference type="GO" id="GO:0005524">
    <property type="term" value="F:ATP binding"/>
    <property type="evidence" value="ECO:0007669"/>
    <property type="project" value="UniProtKB-UniRule"/>
</dbReference>
<dbReference type="GO" id="GO:0003725">
    <property type="term" value="F:double-stranded RNA binding"/>
    <property type="evidence" value="ECO:0007669"/>
    <property type="project" value="InterPro"/>
</dbReference>
<dbReference type="GO" id="GO:0061710">
    <property type="term" value="F:L-threonylcarbamoyladenylate synthase"/>
    <property type="evidence" value="ECO:0007669"/>
    <property type="project" value="UniProtKB-EC"/>
</dbReference>
<dbReference type="GO" id="GO:0000049">
    <property type="term" value="F:tRNA binding"/>
    <property type="evidence" value="ECO:0007669"/>
    <property type="project" value="TreeGrafter"/>
</dbReference>
<dbReference type="GO" id="GO:0006450">
    <property type="term" value="P:regulation of translational fidelity"/>
    <property type="evidence" value="ECO:0007669"/>
    <property type="project" value="TreeGrafter"/>
</dbReference>
<dbReference type="GO" id="GO:0002949">
    <property type="term" value="P:tRNA threonylcarbamoyladenosine modification"/>
    <property type="evidence" value="ECO:0007669"/>
    <property type="project" value="UniProtKB-UniRule"/>
</dbReference>
<dbReference type="FunFam" id="3.90.870.10:FF:000004">
    <property type="entry name" value="Threonylcarbamoyl-AMP synthase"/>
    <property type="match status" value="1"/>
</dbReference>
<dbReference type="Gene3D" id="3.90.870.10">
    <property type="entry name" value="DHBP synthase"/>
    <property type="match status" value="1"/>
</dbReference>
<dbReference type="HAMAP" id="MF_01852">
    <property type="entry name" value="TsaC"/>
    <property type="match status" value="1"/>
</dbReference>
<dbReference type="InterPro" id="IPR017945">
    <property type="entry name" value="DHBP_synth_RibB-like_a/b_dom"/>
</dbReference>
<dbReference type="InterPro" id="IPR006070">
    <property type="entry name" value="Sua5-like_dom"/>
</dbReference>
<dbReference type="InterPro" id="IPR023535">
    <property type="entry name" value="TC-AMP_synthase"/>
</dbReference>
<dbReference type="InterPro" id="IPR050156">
    <property type="entry name" value="TC-AMP_synthase_SUA5"/>
</dbReference>
<dbReference type="NCBIfam" id="NF007919">
    <property type="entry name" value="PRK10634.1"/>
    <property type="match status" value="1"/>
</dbReference>
<dbReference type="PANTHER" id="PTHR17490">
    <property type="entry name" value="SUA5"/>
    <property type="match status" value="1"/>
</dbReference>
<dbReference type="PANTHER" id="PTHR17490:SF18">
    <property type="entry name" value="THREONYLCARBAMOYL-AMP SYNTHASE"/>
    <property type="match status" value="1"/>
</dbReference>
<dbReference type="Pfam" id="PF01300">
    <property type="entry name" value="Sua5_yciO_yrdC"/>
    <property type="match status" value="1"/>
</dbReference>
<dbReference type="SUPFAM" id="SSF55821">
    <property type="entry name" value="YrdC/RibB"/>
    <property type="match status" value="1"/>
</dbReference>
<dbReference type="PROSITE" id="PS51163">
    <property type="entry name" value="YRDC"/>
    <property type="match status" value="1"/>
</dbReference>
<organism>
    <name type="scientific">Yersinia pestis bv. Antiqua (strain Nepal516)</name>
    <dbReference type="NCBI Taxonomy" id="377628"/>
    <lineage>
        <taxon>Bacteria</taxon>
        <taxon>Pseudomonadati</taxon>
        <taxon>Pseudomonadota</taxon>
        <taxon>Gammaproteobacteria</taxon>
        <taxon>Enterobacterales</taxon>
        <taxon>Yersiniaceae</taxon>
        <taxon>Yersinia</taxon>
    </lineage>
</organism>
<keyword id="KW-0067">ATP-binding</keyword>
<keyword id="KW-0963">Cytoplasm</keyword>
<keyword id="KW-0547">Nucleotide-binding</keyword>
<keyword id="KW-0548">Nucleotidyltransferase</keyword>
<keyword id="KW-0808">Transferase</keyword>
<keyword id="KW-0819">tRNA processing</keyword>
<evidence type="ECO:0000255" key="1">
    <source>
        <dbReference type="HAMAP-Rule" id="MF_01852"/>
    </source>
</evidence>